<keyword id="KW-0472">Membrane</keyword>
<keyword id="KW-0602">Photosynthesis</keyword>
<keyword id="KW-0603">Photosystem I</keyword>
<keyword id="KW-0793">Thylakoid</keyword>
<gene>
    <name evidence="1" type="primary">psaE</name>
    <name type="ordered locus">A9601_03551</name>
</gene>
<reference key="1">
    <citation type="journal article" date="2007" name="PLoS Genet.">
        <title>Patterns and implications of gene gain and loss in the evolution of Prochlorococcus.</title>
        <authorList>
            <person name="Kettler G.C."/>
            <person name="Martiny A.C."/>
            <person name="Huang K."/>
            <person name="Zucker J."/>
            <person name="Coleman M.L."/>
            <person name="Rodrigue S."/>
            <person name="Chen F."/>
            <person name="Lapidus A."/>
            <person name="Ferriera S."/>
            <person name="Johnson J."/>
            <person name="Steglich C."/>
            <person name="Church G.M."/>
            <person name="Richardson P."/>
            <person name="Chisholm S.W."/>
        </authorList>
    </citation>
    <scope>NUCLEOTIDE SEQUENCE [LARGE SCALE GENOMIC DNA]</scope>
    <source>
        <strain>AS9601</strain>
    </source>
</reference>
<sequence length="69" mass="7563">MAISRGDLVRVKRPESYWYNEIGKVASVDTSGIKYNCVVRFDKVNYAGISGTDGGANTNNFAESELEKA</sequence>
<comment type="function">
    <text evidence="1">Stabilizes the interaction between PsaC and the PSI core, assists the docking of the ferredoxin to PSI and interacts with ferredoxin-NADP oxidoreductase.</text>
</comment>
<comment type="subcellular location">
    <subcellularLocation>
        <location evidence="1">Cellular thylakoid membrane</location>
        <topology evidence="1">Peripheral membrane protein</topology>
    </subcellularLocation>
</comment>
<comment type="similarity">
    <text evidence="1">Belongs to the PsaE family.</text>
</comment>
<organism>
    <name type="scientific">Prochlorococcus marinus (strain AS9601)</name>
    <dbReference type="NCBI Taxonomy" id="146891"/>
    <lineage>
        <taxon>Bacteria</taxon>
        <taxon>Bacillati</taxon>
        <taxon>Cyanobacteriota</taxon>
        <taxon>Cyanophyceae</taxon>
        <taxon>Synechococcales</taxon>
        <taxon>Prochlorococcaceae</taxon>
        <taxon>Prochlorococcus</taxon>
    </lineage>
</organism>
<proteinExistence type="inferred from homology"/>
<accession>A2BPD2</accession>
<dbReference type="EMBL" id="CP000551">
    <property type="protein sequence ID" value="ABM69643.1"/>
    <property type="molecule type" value="Genomic_DNA"/>
</dbReference>
<dbReference type="RefSeq" id="WP_011817817.1">
    <property type="nucleotide sequence ID" value="NC_008816.1"/>
</dbReference>
<dbReference type="SMR" id="A2BPD2"/>
<dbReference type="STRING" id="146891.A9601_03551"/>
<dbReference type="KEGG" id="pmb:A9601_03551"/>
<dbReference type="eggNOG" id="ENOG503313D">
    <property type="taxonomic scope" value="Bacteria"/>
</dbReference>
<dbReference type="HOGENOM" id="CLU_136462_2_1_3"/>
<dbReference type="OrthoDB" id="427926at2"/>
<dbReference type="Proteomes" id="UP000002590">
    <property type="component" value="Chromosome"/>
</dbReference>
<dbReference type="GO" id="GO:0009538">
    <property type="term" value="C:photosystem I reaction center"/>
    <property type="evidence" value="ECO:0007669"/>
    <property type="project" value="InterPro"/>
</dbReference>
<dbReference type="GO" id="GO:0031676">
    <property type="term" value="C:plasma membrane-derived thylakoid membrane"/>
    <property type="evidence" value="ECO:0007669"/>
    <property type="project" value="UniProtKB-SubCell"/>
</dbReference>
<dbReference type="GO" id="GO:0015979">
    <property type="term" value="P:photosynthesis"/>
    <property type="evidence" value="ECO:0007669"/>
    <property type="project" value="UniProtKB-UniRule"/>
</dbReference>
<dbReference type="Gene3D" id="2.30.30.50">
    <property type="match status" value="1"/>
</dbReference>
<dbReference type="HAMAP" id="MF_00613">
    <property type="entry name" value="PSI_PsaE"/>
    <property type="match status" value="1"/>
</dbReference>
<dbReference type="InterPro" id="IPR008990">
    <property type="entry name" value="Elect_transpt_acc-like_dom_sf"/>
</dbReference>
<dbReference type="InterPro" id="IPR003375">
    <property type="entry name" value="PSI_PsaE"/>
</dbReference>
<dbReference type="NCBIfam" id="NF002745">
    <property type="entry name" value="PRK02749.1"/>
    <property type="match status" value="1"/>
</dbReference>
<dbReference type="PANTHER" id="PTHR34549">
    <property type="entry name" value="PHOTOSYSTEM I REACTION CENTER SUBUNIT IV A, CHLOROPLASTIC-RELATED"/>
    <property type="match status" value="1"/>
</dbReference>
<dbReference type="PANTHER" id="PTHR34549:SF2">
    <property type="entry name" value="PHOTOSYSTEM I SUBUNIT IV"/>
    <property type="match status" value="1"/>
</dbReference>
<dbReference type="Pfam" id="PF02427">
    <property type="entry name" value="PSI_PsaE"/>
    <property type="match status" value="1"/>
</dbReference>
<dbReference type="SUPFAM" id="SSF50090">
    <property type="entry name" value="Electron transport accessory proteins"/>
    <property type="match status" value="1"/>
</dbReference>
<name>PSAE_PROMS</name>
<feature type="chain" id="PRO_1000061308" description="Photosystem I reaction center subunit IV">
    <location>
        <begin position="1"/>
        <end position="69"/>
    </location>
</feature>
<protein>
    <recommendedName>
        <fullName evidence="1">Photosystem I reaction center subunit IV</fullName>
    </recommendedName>
</protein>
<evidence type="ECO:0000255" key="1">
    <source>
        <dbReference type="HAMAP-Rule" id="MF_00613"/>
    </source>
</evidence>